<sequence length="36" mass="4154">MLTLKLFVYTVVIFFVSLFIFGFLSNDPGRNPGRDE</sequence>
<name>PSBI_ORYNI</name>
<proteinExistence type="inferred from homology"/>
<protein>
    <recommendedName>
        <fullName evidence="1">Photosystem II reaction center protein I</fullName>
        <shortName evidence="1">PSII-I</shortName>
    </recommendedName>
    <alternativeName>
        <fullName evidence="1">PSII 4.8 kDa protein</fullName>
    </alternativeName>
</protein>
<evidence type="ECO:0000255" key="1">
    <source>
        <dbReference type="HAMAP-Rule" id="MF_01316"/>
    </source>
</evidence>
<evidence type="ECO:0000312" key="2">
    <source>
        <dbReference type="Proteomes" id="UP000006591"/>
    </source>
</evidence>
<gene>
    <name evidence="1" type="primary">psbI</name>
</gene>
<accession>Q6ENJ3</accession>
<comment type="function">
    <text evidence="1">One of the components of the core complex of photosystem II (PSII), required for its stability and/or assembly. PSII is a light-driven water:plastoquinone oxidoreductase that uses light energy to abstract electrons from H(2)O, generating O(2) and a proton gradient subsequently used for ATP formation. It consists of a core antenna complex that captures photons, and an electron transfer chain that converts photonic excitation into a charge separation.</text>
</comment>
<comment type="subunit">
    <text evidence="1">PSII is composed of 1 copy each of membrane proteins PsbA, PsbB, PsbC, PsbD, PsbE, PsbF, PsbH, PsbI, PsbJ, PsbK, PsbL, PsbM, PsbT, PsbX, PsbY, PsbZ, Psb30/Ycf12, at least 3 peripheral proteins of the oxygen-evolving complex and a large number of cofactors. It forms dimeric complexes.</text>
</comment>
<comment type="subcellular location">
    <subcellularLocation>
        <location evidence="1">Plastid</location>
        <location evidence="1">Chloroplast thylakoid membrane</location>
        <topology evidence="1">Single-pass membrane protein</topology>
    </subcellularLocation>
</comment>
<comment type="similarity">
    <text evidence="1">Belongs to the PsbI family.</text>
</comment>
<feature type="chain" id="PRO_0000219641" description="Photosystem II reaction center protein I">
    <location>
        <begin position="1"/>
        <end position="36"/>
    </location>
</feature>
<feature type="transmembrane region" description="Helical" evidence="1">
    <location>
        <begin position="4"/>
        <end position="24"/>
    </location>
</feature>
<organism>
    <name type="scientific">Oryza nivara</name>
    <name type="common">Indian wild rice</name>
    <name type="synonym">Oryza sativa f. spontanea</name>
    <dbReference type="NCBI Taxonomy" id="4536"/>
    <lineage>
        <taxon>Eukaryota</taxon>
        <taxon>Viridiplantae</taxon>
        <taxon>Streptophyta</taxon>
        <taxon>Embryophyta</taxon>
        <taxon>Tracheophyta</taxon>
        <taxon>Spermatophyta</taxon>
        <taxon>Magnoliopsida</taxon>
        <taxon>Liliopsida</taxon>
        <taxon>Poales</taxon>
        <taxon>Poaceae</taxon>
        <taxon>BOP clade</taxon>
        <taxon>Oryzoideae</taxon>
        <taxon>Oryzeae</taxon>
        <taxon>Oryzinae</taxon>
        <taxon>Oryza</taxon>
    </lineage>
</organism>
<geneLocation type="chloroplast"/>
<keyword id="KW-0150">Chloroplast</keyword>
<keyword id="KW-0472">Membrane</keyword>
<keyword id="KW-0602">Photosynthesis</keyword>
<keyword id="KW-0604">Photosystem II</keyword>
<keyword id="KW-0934">Plastid</keyword>
<keyword id="KW-0674">Reaction center</keyword>
<keyword id="KW-1185">Reference proteome</keyword>
<keyword id="KW-0793">Thylakoid</keyword>
<keyword id="KW-0812">Transmembrane</keyword>
<keyword id="KW-1133">Transmembrane helix</keyword>
<dbReference type="EMBL" id="AP006728">
    <property type="protein sequence ID" value="BAD26759.1"/>
    <property type="molecule type" value="Genomic_DNA"/>
</dbReference>
<dbReference type="RefSeq" id="YP_052730.1">
    <property type="nucleotide sequence ID" value="NC_005973.1"/>
</dbReference>
<dbReference type="SMR" id="Q6ENJ3"/>
<dbReference type="STRING" id="4536.Q6ENJ3"/>
<dbReference type="GeneID" id="2885912"/>
<dbReference type="Proteomes" id="UP000006591">
    <property type="component" value="Chloroplast"/>
</dbReference>
<dbReference type="GO" id="GO:0009535">
    <property type="term" value="C:chloroplast thylakoid membrane"/>
    <property type="evidence" value="ECO:0007669"/>
    <property type="project" value="UniProtKB-SubCell"/>
</dbReference>
<dbReference type="GO" id="GO:0009539">
    <property type="term" value="C:photosystem II reaction center"/>
    <property type="evidence" value="ECO:0007669"/>
    <property type="project" value="InterPro"/>
</dbReference>
<dbReference type="GO" id="GO:0009536">
    <property type="term" value="C:plastid"/>
    <property type="evidence" value="ECO:0000305"/>
    <property type="project" value="Gramene"/>
</dbReference>
<dbReference type="GO" id="GO:0015979">
    <property type="term" value="P:photosynthesis"/>
    <property type="evidence" value="ECO:0007669"/>
    <property type="project" value="UniProtKB-UniRule"/>
</dbReference>
<dbReference type="HAMAP" id="MF_01316">
    <property type="entry name" value="PSII_PsbI"/>
    <property type="match status" value="1"/>
</dbReference>
<dbReference type="InterPro" id="IPR003686">
    <property type="entry name" value="PSII_PsbI"/>
</dbReference>
<dbReference type="InterPro" id="IPR037271">
    <property type="entry name" value="PSII_PsbI_sf"/>
</dbReference>
<dbReference type="NCBIfam" id="NF002735">
    <property type="entry name" value="PRK02655.1"/>
    <property type="match status" value="1"/>
</dbReference>
<dbReference type="PANTHER" id="PTHR35772">
    <property type="entry name" value="PHOTOSYSTEM II REACTION CENTER PROTEIN I"/>
    <property type="match status" value="1"/>
</dbReference>
<dbReference type="PANTHER" id="PTHR35772:SF1">
    <property type="entry name" value="PHOTOSYSTEM II REACTION CENTER PROTEIN I"/>
    <property type="match status" value="1"/>
</dbReference>
<dbReference type="Pfam" id="PF02532">
    <property type="entry name" value="PsbI"/>
    <property type="match status" value="1"/>
</dbReference>
<dbReference type="SUPFAM" id="SSF161041">
    <property type="entry name" value="Photosystem II reaction center protein I, PsbI"/>
    <property type="match status" value="1"/>
</dbReference>
<reference key="1">
    <citation type="journal article" date="2004" name="Gene">
        <title>The complete nucleotide sequence of wild rice (Oryza nivara) chloroplast genome: first genome wide comparative sequence analysis of wild and cultivated rice.</title>
        <authorList>
            <person name="Masood M.S."/>
            <person name="Nishikawa T."/>
            <person name="Fukuoka S."/>
            <person name="Njenga P.K."/>
            <person name="Tsudzuki T."/>
            <person name="Kadowaki K."/>
        </authorList>
    </citation>
    <scope>NUCLEOTIDE SEQUENCE [LARGE SCALE GENOMIC DNA]</scope>
    <source>
        <strain evidence="2">cv. SL10</strain>
    </source>
</reference>